<feature type="chain" id="PRO_1000053276" description="ATP synthase gamma chain">
    <location>
        <begin position="1"/>
        <end position="287"/>
    </location>
</feature>
<keyword id="KW-0066">ATP synthesis</keyword>
<keyword id="KW-0997">Cell inner membrane</keyword>
<keyword id="KW-1003">Cell membrane</keyword>
<keyword id="KW-0139">CF(1)</keyword>
<keyword id="KW-0375">Hydrogen ion transport</keyword>
<keyword id="KW-0406">Ion transport</keyword>
<keyword id="KW-0472">Membrane</keyword>
<keyword id="KW-1185">Reference proteome</keyword>
<keyword id="KW-0813">Transport</keyword>
<proteinExistence type="inferred from homology"/>
<reference key="1">
    <citation type="journal article" date="2007" name="PLoS Biol.">
        <title>Evolution of symbiotic bacteria in the distal human intestine.</title>
        <authorList>
            <person name="Xu J."/>
            <person name="Mahowald M.A."/>
            <person name="Ley R.E."/>
            <person name="Lozupone C.A."/>
            <person name="Hamady M."/>
            <person name="Martens E.C."/>
            <person name="Henrissat B."/>
            <person name="Coutinho P.M."/>
            <person name="Minx P."/>
            <person name="Latreille P."/>
            <person name="Cordum H."/>
            <person name="Van Brunt A."/>
            <person name="Kim K."/>
            <person name="Fulton R.S."/>
            <person name="Fulton L.A."/>
            <person name="Clifton S.W."/>
            <person name="Wilson R.K."/>
            <person name="Knight R.D."/>
            <person name="Gordon J.I."/>
        </authorList>
    </citation>
    <scope>NUCLEOTIDE SEQUENCE [LARGE SCALE GENOMIC DNA]</scope>
    <source>
        <strain>ATCC 8503 / DSM 20701 / CIP 104284 / JCM 5825 / NCTC 11152</strain>
    </source>
</reference>
<accession>A6L8N4</accession>
<gene>
    <name evidence="1" type="primary">atpG</name>
    <name type="ordered locus">BDI_0263</name>
</gene>
<evidence type="ECO:0000255" key="1">
    <source>
        <dbReference type="HAMAP-Rule" id="MF_00815"/>
    </source>
</evidence>
<dbReference type="EMBL" id="CP000140">
    <property type="protein sequence ID" value="ABR42048.1"/>
    <property type="molecule type" value="Genomic_DNA"/>
</dbReference>
<dbReference type="RefSeq" id="WP_005865919.1">
    <property type="nucleotide sequence ID" value="NC_009615.1"/>
</dbReference>
<dbReference type="SMR" id="A6L8N4"/>
<dbReference type="STRING" id="435591.BDI_0263"/>
<dbReference type="PaxDb" id="435591-BDI_0263"/>
<dbReference type="KEGG" id="pdi:BDI_0263"/>
<dbReference type="eggNOG" id="COG0224">
    <property type="taxonomic scope" value="Bacteria"/>
</dbReference>
<dbReference type="HOGENOM" id="CLU_050669_0_1_10"/>
<dbReference type="BioCyc" id="PDIS435591:G1G5A-269-MONOMER"/>
<dbReference type="Proteomes" id="UP000000566">
    <property type="component" value="Chromosome"/>
</dbReference>
<dbReference type="GO" id="GO:0005886">
    <property type="term" value="C:plasma membrane"/>
    <property type="evidence" value="ECO:0007669"/>
    <property type="project" value="UniProtKB-SubCell"/>
</dbReference>
<dbReference type="GO" id="GO:0045259">
    <property type="term" value="C:proton-transporting ATP synthase complex"/>
    <property type="evidence" value="ECO:0007669"/>
    <property type="project" value="UniProtKB-KW"/>
</dbReference>
<dbReference type="GO" id="GO:0005524">
    <property type="term" value="F:ATP binding"/>
    <property type="evidence" value="ECO:0007669"/>
    <property type="project" value="UniProtKB-UniRule"/>
</dbReference>
<dbReference type="GO" id="GO:0046933">
    <property type="term" value="F:proton-transporting ATP synthase activity, rotational mechanism"/>
    <property type="evidence" value="ECO:0007669"/>
    <property type="project" value="UniProtKB-UniRule"/>
</dbReference>
<dbReference type="GO" id="GO:0042777">
    <property type="term" value="P:proton motive force-driven plasma membrane ATP synthesis"/>
    <property type="evidence" value="ECO:0007669"/>
    <property type="project" value="UniProtKB-UniRule"/>
</dbReference>
<dbReference type="CDD" id="cd12151">
    <property type="entry name" value="F1-ATPase_gamma"/>
    <property type="match status" value="1"/>
</dbReference>
<dbReference type="Gene3D" id="3.40.1380.10">
    <property type="match status" value="1"/>
</dbReference>
<dbReference type="Gene3D" id="1.10.287.80">
    <property type="entry name" value="ATP synthase, gamma subunit, helix hairpin domain"/>
    <property type="match status" value="1"/>
</dbReference>
<dbReference type="HAMAP" id="MF_00815">
    <property type="entry name" value="ATP_synth_gamma_bact"/>
    <property type="match status" value="1"/>
</dbReference>
<dbReference type="InterPro" id="IPR035968">
    <property type="entry name" value="ATP_synth_F1_ATPase_gsu"/>
</dbReference>
<dbReference type="InterPro" id="IPR000131">
    <property type="entry name" value="ATP_synth_F1_gsu"/>
</dbReference>
<dbReference type="NCBIfam" id="TIGR01146">
    <property type="entry name" value="ATPsyn_F1gamma"/>
    <property type="match status" value="1"/>
</dbReference>
<dbReference type="NCBIfam" id="NF009959">
    <property type="entry name" value="PRK13426.1"/>
    <property type="match status" value="1"/>
</dbReference>
<dbReference type="PANTHER" id="PTHR11693">
    <property type="entry name" value="ATP SYNTHASE GAMMA CHAIN"/>
    <property type="match status" value="1"/>
</dbReference>
<dbReference type="PANTHER" id="PTHR11693:SF22">
    <property type="entry name" value="ATP SYNTHASE SUBUNIT GAMMA, MITOCHONDRIAL"/>
    <property type="match status" value="1"/>
</dbReference>
<dbReference type="Pfam" id="PF00231">
    <property type="entry name" value="ATP-synt"/>
    <property type="match status" value="1"/>
</dbReference>
<dbReference type="PRINTS" id="PR00126">
    <property type="entry name" value="ATPASEGAMMA"/>
</dbReference>
<dbReference type="SUPFAM" id="SSF52943">
    <property type="entry name" value="ATP synthase (F1-ATPase), gamma subunit"/>
    <property type="match status" value="1"/>
</dbReference>
<sequence>MGSLKEIKVRIASIRSTQKITAAMKMVSSAKFHHAQTQTEHTLTYANKLSAILNGLLSAECDLDSPYTEQRKVSKVAIAVFASSTGLCGTFNANIWKELSATIQTYKNQQIEVGLYPIGKKIADELHKAGYSFDTDFVTIGEKPSYESAVSLANRLMELFVTGKADRVELLYHHFKNMATQVVTHKTYLPLSLSDTEAAETATDYILEPSAEELRNRLFPKLLNLTIYTILLDTSTAEHAARMMAMQTANDNANDLIQQLTLQYNKTRQQAITNELLDIMGGAAVSS</sequence>
<protein>
    <recommendedName>
        <fullName evidence="1">ATP synthase gamma chain</fullName>
    </recommendedName>
    <alternativeName>
        <fullName evidence="1">ATP synthase F1 sector gamma subunit</fullName>
    </alternativeName>
    <alternativeName>
        <fullName evidence="1">F-ATPase gamma subunit</fullName>
    </alternativeName>
</protein>
<organism>
    <name type="scientific">Parabacteroides distasonis (strain ATCC 8503 / DSM 20701 / CIP 104284 / JCM 5825 / NCTC 11152)</name>
    <dbReference type="NCBI Taxonomy" id="435591"/>
    <lineage>
        <taxon>Bacteria</taxon>
        <taxon>Pseudomonadati</taxon>
        <taxon>Bacteroidota</taxon>
        <taxon>Bacteroidia</taxon>
        <taxon>Bacteroidales</taxon>
        <taxon>Tannerellaceae</taxon>
        <taxon>Parabacteroides</taxon>
    </lineage>
</organism>
<name>ATPG_PARD8</name>
<comment type="function">
    <text evidence="1">Produces ATP from ADP in the presence of a proton gradient across the membrane. The gamma chain is believed to be important in regulating ATPase activity and the flow of protons through the CF(0) complex.</text>
</comment>
<comment type="subunit">
    <text evidence="1">F-type ATPases have 2 components, CF(1) - the catalytic core - and CF(0) - the membrane proton channel. CF(1) has five subunits: alpha(3), beta(3), gamma(1), delta(1), epsilon(1). CF(0) has three main subunits: a, b and c.</text>
</comment>
<comment type="subcellular location">
    <subcellularLocation>
        <location evidence="1">Cell inner membrane</location>
        <topology evidence="1">Peripheral membrane protein</topology>
    </subcellularLocation>
</comment>
<comment type="similarity">
    <text evidence="1">Belongs to the ATPase gamma chain family.</text>
</comment>